<keyword id="KW-0167">Capsid protein</keyword>
<keyword id="KW-1176">Cytoplasmic inwards viral transport</keyword>
<keyword id="KW-1048">Host nucleus</keyword>
<keyword id="KW-0945">Host-virus interaction</keyword>
<keyword id="KW-0426">Late protein</keyword>
<keyword id="KW-1177">Microtubular inwards viral transport</keyword>
<keyword id="KW-1148">T=25 icosahedral capsid protein</keyword>
<keyword id="KW-0946">Virion</keyword>
<keyword id="KW-1160">Virus entry into host cell</keyword>
<gene>
    <name type="ORF">L3</name>
</gene>
<sequence length="467" mass="52060">AYNALAPKGAPNSCEWEQEEPTQEMAGELEDEEEAEEEEAEEEAEAPQAGQKVKKTHVYAQAPLAGEKITANGLQIVSDTQTEGNPVFADPTYQPEPQVGESQWNEAEATAIGGRVLKKTTPMKPCYGSYARPTNKNGGQGILVANNQGALESKVEMQFFAPSGTAMNERNAVQPSIVLYSEDVNMETPDTHISYKPSKTDENSKAMLGQQAMPNRPNYIAFRDNFIGLMYYNSTGNMGVLAGQASQLNAVVDLQDRNTELSYQLLLDSIGDRTRYFSMWNQAVDSYDPDVRIIENHGTEDELPNYCFPLGGIGVTDTYQGIKSNGNGNPQNWTKNDDFAARNEIGVGNNFALEINLNANLWRNFLYSNIALYLPDKLKYTPTNVEISPNPNSYDYMNKRVVAPGLVDCYINLGARWSLDYMENVNPFNHHRNAGLRYRSMLLGNGRYVPFHIQVPQKFFAIKNLLL</sequence>
<dbReference type="EMBL" id="X67709">
    <property type="protein sequence ID" value="CAA47946.1"/>
    <property type="molecule type" value="Genomic_DNA"/>
</dbReference>
<dbReference type="SMR" id="Q04965"/>
<dbReference type="GO" id="GO:0043657">
    <property type="term" value="C:host cell"/>
    <property type="evidence" value="ECO:0007669"/>
    <property type="project" value="GOC"/>
</dbReference>
<dbReference type="GO" id="GO:0042025">
    <property type="term" value="C:host cell nucleus"/>
    <property type="evidence" value="ECO:0007669"/>
    <property type="project" value="UniProtKB-SubCell"/>
</dbReference>
<dbReference type="GO" id="GO:0039623">
    <property type="term" value="C:T=25 icosahedral viral capsid"/>
    <property type="evidence" value="ECO:0007669"/>
    <property type="project" value="UniProtKB-KW"/>
</dbReference>
<dbReference type="GO" id="GO:0075521">
    <property type="term" value="P:microtubule-dependent intracellular transport of viral material towards nucleus"/>
    <property type="evidence" value="ECO:0007669"/>
    <property type="project" value="UniProtKB-KW"/>
</dbReference>
<dbReference type="GO" id="GO:0046718">
    <property type="term" value="P:symbiont entry into host cell"/>
    <property type="evidence" value="ECO:0007669"/>
    <property type="project" value="UniProtKB-KW"/>
</dbReference>
<dbReference type="Gene3D" id="2.170.9.10">
    <property type="entry name" value="Adenovirus Type 2 Hexon, domain 1"/>
    <property type="match status" value="1"/>
</dbReference>
<dbReference type="Gene3D" id="3.90.39.10">
    <property type="entry name" value="Hexon Major Viral Coat Protein, domain 2"/>
    <property type="match status" value="1"/>
</dbReference>
<dbReference type="InterPro" id="IPR016107">
    <property type="entry name" value="Adenovirus_Pll_hexon_N"/>
</dbReference>
<dbReference type="InterPro" id="IPR044942">
    <property type="entry name" value="Adenovirus_Pll_hexon_sub2"/>
</dbReference>
<dbReference type="InterPro" id="IPR016112">
    <property type="entry name" value="VP_dsDNA_II"/>
</dbReference>
<dbReference type="Pfam" id="PF01065">
    <property type="entry name" value="Adeno_hexon"/>
    <property type="match status" value="1"/>
</dbReference>
<dbReference type="SUPFAM" id="SSF49749">
    <property type="entry name" value="Group II dsDNA viruses VP"/>
    <property type="match status" value="1"/>
</dbReference>
<organismHost>
    <name type="scientific">Homo sapiens</name>
    <name type="common">Human</name>
    <dbReference type="NCBI Taxonomy" id="9606"/>
</organismHost>
<proteinExistence type="evidence at transcript level"/>
<accession>Q04965</accession>
<feature type="chain" id="PRO_0000221812" description="Hexon protein">
    <location>
        <begin position="1" status="less than"/>
        <end position="467" status="greater than"/>
    </location>
</feature>
<feature type="region of interest" description="Disordered" evidence="2">
    <location>
        <begin position="1"/>
        <end position="54"/>
    </location>
</feature>
<feature type="compositionally biased region" description="Acidic residues" evidence="2">
    <location>
        <begin position="16"/>
        <end position="45"/>
    </location>
</feature>
<feature type="non-terminal residue">
    <location>
        <position position="1"/>
    </location>
</feature>
<feature type="non-terminal residue">
    <location>
        <position position="467"/>
    </location>
</feature>
<evidence type="ECO:0000250" key="1"/>
<evidence type="ECO:0000256" key="2">
    <source>
        <dbReference type="SAM" id="MobiDB-lite"/>
    </source>
</evidence>
<evidence type="ECO:0000305" key="3"/>
<organism>
    <name type="scientific">Human adenovirus C serotype 1</name>
    <name type="common">HAdV-1</name>
    <name type="synonym">Human adenovirus 1</name>
    <dbReference type="NCBI Taxonomy" id="10533"/>
    <lineage>
        <taxon>Viruses</taxon>
        <taxon>Varidnaviria</taxon>
        <taxon>Bamfordvirae</taxon>
        <taxon>Preplasmiviricota</taxon>
        <taxon>Tectiliviricetes</taxon>
        <taxon>Rowavirales</taxon>
        <taxon>Adenoviridae</taxon>
        <taxon>Mastadenovirus</taxon>
        <taxon>Human mastadenovirus C</taxon>
    </lineage>
</organism>
<protein>
    <recommendedName>
        <fullName>Hexon protein</fullName>
        <shortName>CP-H</shortName>
    </recommendedName>
    <alternativeName>
        <fullName>Protein II</fullName>
    </alternativeName>
</protein>
<name>CAPSH_ADE01</name>
<comment type="function">
    <text evidence="1">Major capsid protein that self-associates to form 240 hexon trimers, each in the shape of a hexagon, building most of the pseudo T=25 capsid. Assembled into trimeric units with the help of the chaperone shutoff protein. Transported by pre-protein VI to the nucleus where it associates with other structural proteins to form an empty capsid. Might be involved, through its interaction with host dyneins, in the intracellular microtubule-dependent transport of incoming viral capsid to the nucleus (By similarity).</text>
</comment>
<comment type="subunit">
    <text evidence="1">Homotrimer (By similarity). Interacts with the capsid vertex protein; this interaction binds the peripentonal hexons to the neighboring penton base. Interacts with the hexon-linking protein; this interaction tethers the hexons surrounding the penton to those situated in the central plate of the facet. Interacts with the hexon-interlacing protein; this interaction lashes the hexons together. Interacts with host dyneins DYNC1LI1 and DYNC1I2; this interaction might be involved in intracellular microtubule-dependent transport of incoming viral capsid. Interacts with the shutoff protein; this interaction allows folding and formation of hexons trimers. Interacts with pre-protein VI; this interaction probably allows nuclear import of hexon trimers and possibly pre-capsid assembly (By similarity).</text>
</comment>
<comment type="subcellular location">
    <subcellularLocation>
        <location evidence="1">Virion</location>
    </subcellularLocation>
    <subcellularLocation>
        <location evidence="1">Host nucleus</location>
    </subcellularLocation>
    <text evidence="1">Forms the capsid icosahedric shell. Present in 720 copies per virion, assembled in 240 trimers (By similarity).</text>
</comment>
<comment type="induction">
    <text>Expressed in the late phase of the viral replicative cycle.</text>
</comment>
<comment type="miscellaneous">
    <text evidence="1">All late proteins expressed from the major late promoter are produced by alternative splicing and alternative polyadenylation of the same gene giving rise to non-overlapping ORFs. A leader sequence is present in the N-terminus of all these mRNAs and is recognized by the viral shutoff protein to provide expression although conventional translation via ribosome scanning from the cap has been shut off in the host cell (By similarity).</text>
</comment>
<comment type="similarity">
    <text evidence="3">Belongs to the adenoviridae hexon protein family.</text>
</comment>
<reference key="1">
    <citation type="journal article" date="1993" name="Res. Virol.">
        <title>The hexon genes of adenoviruses of subgenus C: comparison of the variable regions.</title>
        <authorList>
            <person name="Pring-Akerblom P."/>
            <person name="Adrian T."/>
        </authorList>
    </citation>
    <scope>NUCLEOTIDE SEQUENCE [GENOMIC DNA]</scope>
</reference>